<organism>
    <name type="scientific">Homo sapiens</name>
    <name type="common">Human</name>
    <dbReference type="NCBI Taxonomy" id="9606"/>
    <lineage>
        <taxon>Eukaryota</taxon>
        <taxon>Metazoa</taxon>
        <taxon>Chordata</taxon>
        <taxon>Craniata</taxon>
        <taxon>Vertebrata</taxon>
        <taxon>Euteleostomi</taxon>
        <taxon>Mammalia</taxon>
        <taxon>Eutheria</taxon>
        <taxon>Euarchontoglires</taxon>
        <taxon>Primates</taxon>
        <taxon>Haplorrhini</taxon>
        <taxon>Catarrhini</taxon>
        <taxon>Hominidae</taxon>
        <taxon>Homo</taxon>
    </lineage>
</organism>
<protein>
    <recommendedName>
        <fullName evidence="2">PIK3R3 upstream open reading frame protein</fullName>
    </recommendedName>
</protein>
<sequence length="95" mass="10952">MGPSRLVRGPRPQGMRSPYRRPGMGWPRPRFPRMFKCSRRRYQQGLRGRTASSAAINPATRAMGINNTHTDTTIVWIFPPQVLRHLRQPGIFLIL</sequence>
<gene>
    <name evidence="3" type="primary">P3R3URF</name>
</gene>
<proteinExistence type="evidence at protein level"/>
<keyword id="KW-1267">Proteomics identification</keyword>
<keyword id="KW-1185">Reference proteome</keyword>
<evidence type="ECO:0000256" key="1">
    <source>
        <dbReference type="SAM" id="MobiDB-lite"/>
    </source>
</evidence>
<evidence type="ECO:0000305" key="2"/>
<evidence type="ECO:0000312" key="3">
    <source>
        <dbReference type="HGNC" id="HGNC:53451"/>
    </source>
</evidence>
<dbReference type="EMBL" id="AL672043">
    <property type="status" value="NOT_ANNOTATED_CDS"/>
    <property type="molecule type" value="Genomic_DNA"/>
</dbReference>
<dbReference type="EMBL" id="AI208897">
    <property type="status" value="NOT_ANNOTATED_CDS"/>
    <property type="molecule type" value="mRNA"/>
</dbReference>
<dbReference type="CCDS" id="CCDS85970.1"/>
<dbReference type="RefSeq" id="NP_001315584.1">
    <property type="nucleotide sequence ID" value="NM_001328655.2"/>
</dbReference>
<dbReference type="STRING" id="9606.ENSP00000480059"/>
<dbReference type="BioMuta" id="ENSG00000250719"/>
<dbReference type="jPOST" id="A0A087WWA1"/>
<dbReference type="MassIVE" id="A0A087WWA1"/>
<dbReference type="PaxDb" id="9606-ENSP00000480059"/>
<dbReference type="PeptideAtlas" id="A0A087WWA1"/>
<dbReference type="DNASU" id="110117498"/>
<dbReference type="Ensembl" id="ENST00000506599.2">
    <property type="protein sequence ID" value="ENSP00000480059.2"/>
    <property type="gene ID" value="ENSG00000250719.2"/>
</dbReference>
<dbReference type="GeneID" id="110117498"/>
<dbReference type="KEGG" id="hsa:110117498"/>
<dbReference type="MANE-Select" id="ENST00000506599.2">
    <property type="protein sequence ID" value="ENSP00000480059.2"/>
    <property type="RefSeq nucleotide sequence ID" value="NM_001328655.2"/>
    <property type="RefSeq protein sequence ID" value="NP_001315584.1"/>
</dbReference>
<dbReference type="UCSC" id="uc057gct.1">
    <property type="organism name" value="human"/>
</dbReference>
<dbReference type="AGR" id="HGNC:53451"/>
<dbReference type="CTD" id="110117498"/>
<dbReference type="GeneCards" id="P3R3URF"/>
<dbReference type="HGNC" id="HGNC:53451">
    <property type="gene designation" value="P3R3URF"/>
</dbReference>
<dbReference type="HPA" id="ENSG00000250719">
    <property type="expression patterns" value="Tissue enriched (testis)"/>
</dbReference>
<dbReference type="neXtProt" id="NX_A0A087WWA1"/>
<dbReference type="VEuPathDB" id="HostDB:ENSG00000250719"/>
<dbReference type="eggNOG" id="KOG4637">
    <property type="taxonomic scope" value="Eukaryota"/>
</dbReference>
<dbReference type="GeneTree" id="ENSGT00700000106049"/>
<dbReference type="HOGENOM" id="CLU_2372156_0_0_1"/>
<dbReference type="InParanoid" id="A0A087WWA1"/>
<dbReference type="OMA" id="PGIGWPR"/>
<dbReference type="OrthoDB" id="9517304at2759"/>
<dbReference type="PAN-GO" id="A0A087WWA1">
    <property type="GO annotations" value="3 GO annotations based on evolutionary models"/>
</dbReference>
<dbReference type="PRO" id="PR:A0A087WWA1"/>
<dbReference type="Proteomes" id="UP000005640">
    <property type="component" value="Chromosome 1"/>
</dbReference>
<dbReference type="RNAct" id="A0A087WWA1">
    <property type="molecule type" value="protein"/>
</dbReference>
<dbReference type="Bgee" id="ENSG00000250719">
    <property type="expression patterns" value="Expressed in left testis and 43 other cell types or tissues"/>
</dbReference>
<dbReference type="GO" id="GO:0019221">
    <property type="term" value="P:cytokine-mediated signaling pathway"/>
    <property type="evidence" value="ECO:0000318"/>
    <property type="project" value="GO_Central"/>
</dbReference>
<name>P3URF_HUMAN</name>
<feature type="chain" id="PRO_0000446328" description="PIK3R3 upstream open reading frame protein">
    <location>
        <begin position="1"/>
        <end position="95"/>
    </location>
</feature>
<feature type="region of interest" description="Disordered" evidence="1">
    <location>
        <begin position="1"/>
        <end position="27"/>
    </location>
</feature>
<accession>A0A087WWA1</accession>
<reference key="1">
    <citation type="journal article" date="2006" name="Nature">
        <title>The DNA sequence and biological annotation of human chromosome 1.</title>
        <authorList>
            <person name="Gregory S.G."/>
            <person name="Barlow K.F."/>
            <person name="McLay K.E."/>
            <person name="Kaul R."/>
            <person name="Swarbreck D."/>
            <person name="Dunham A."/>
            <person name="Scott C.E."/>
            <person name="Howe K.L."/>
            <person name="Woodfine K."/>
            <person name="Spencer C.C.A."/>
            <person name="Jones M.C."/>
            <person name="Gillson C."/>
            <person name="Searle S."/>
            <person name="Zhou Y."/>
            <person name="Kokocinski F."/>
            <person name="McDonald L."/>
            <person name="Evans R."/>
            <person name="Phillips K."/>
            <person name="Atkinson A."/>
            <person name="Cooper R."/>
            <person name="Jones C."/>
            <person name="Hall R.E."/>
            <person name="Andrews T.D."/>
            <person name="Lloyd C."/>
            <person name="Ainscough R."/>
            <person name="Almeida J.P."/>
            <person name="Ambrose K.D."/>
            <person name="Anderson F."/>
            <person name="Andrew R.W."/>
            <person name="Ashwell R.I.S."/>
            <person name="Aubin K."/>
            <person name="Babbage A.K."/>
            <person name="Bagguley C.L."/>
            <person name="Bailey J."/>
            <person name="Beasley H."/>
            <person name="Bethel G."/>
            <person name="Bird C.P."/>
            <person name="Bray-Allen S."/>
            <person name="Brown J.Y."/>
            <person name="Brown A.J."/>
            <person name="Buckley D."/>
            <person name="Burton J."/>
            <person name="Bye J."/>
            <person name="Carder C."/>
            <person name="Chapman J.C."/>
            <person name="Clark S.Y."/>
            <person name="Clarke G."/>
            <person name="Clee C."/>
            <person name="Cobley V."/>
            <person name="Collier R.E."/>
            <person name="Corby N."/>
            <person name="Coville G.J."/>
            <person name="Davies J."/>
            <person name="Deadman R."/>
            <person name="Dunn M."/>
            <person name="Earthrowl M."/>
            <person name="Ellington A.G."/>
            <person name="Errington H."/>
            <person name="Frankish A."/>
            <person name="Frankland J."/>
            <person name="French L."/>
            <person name="Garner P."/>
            <person name="Garnett J."/>
            <person name="Gay L."/>
            <person name="Ghori M.R.J."/>
            <person name="Gibson R."/>
            <person name="Gilby L.M."/>
            <person name="Gillett W."/>
            <person name="Glithero R.J."/>
            <person name="Grafham D.V."/>
            <person name="Griffiths C."/>
            <person name="Griffiths-Jones S."/>
            <person name="Grocock R."/>
            <person name="Hammond S."/>
            <person name="Harrison E.S.I."/>
            <person name="Hart E."/>
            <person name="Haugen E."/>
            <person name="Heath P.D."/>
            <person name="Holmes S."/>
            <person name="Holt K."/>
            <person name="Howden P.J."/>
            <person name="Hunt A.R."/>
            <person name="Hunt S.E."/>
            <person name="Hunter G."/>
            <person name="Isherwood J."/>
            <person name="James R."/>
            <person name="Johnson C."/>
            <person name="Johnson D."/>
            <person name="Joy A."/>
            <person name="Kay M."/>
            <person name="Kershaw J.K."/>
            <person name="Kibukawa M."/>
            <person name="Kimberley A.M."/>
            <person name="King A."/>
            <person name="Knights A.J."/>
            <person name="Lad H."/>
            <person name="Laird G."/>
            <person name="Lawlor S."/>
            <person name="Leongamornlert D.A."/>
            <person name="Lloyd D.M."/>
            <person name="Loveland J."/>
            <person name="Lovell J."/>
            <person name="Lush M.J."/>
            <person name="Lyne R."/>
            <person name="Martin S."/>
            <person name="Mashreghi-Mohammadi M."/>
            <person name="Matthews L."/>
            <person name="Matthews N.S.W."/>
            <person name="McLaren S."/>
            <person name="Milne S."/>
            <person name="Mistry S."/>
            <person name="Moore M.J.F."/>
            <person name="Nickerson T."/>
            <person name="O'Dell C.N."/>
            <person name="Oliver K."/>
            <person name="Palmeiri A."/>
            <person name="Palmer S.A."/>
            <person name="Parker A."/>
            <person name="Patel D."/>
            <person name="Pearce A.V."/>
            <person name="Peck A.I."/>
            <person name="Pelan S."/>
            <person name="Phelps K."/>
            <person name="Phillimore B.J."/>
            <person name="Plumb R."/>
            <person name="Rajan J."/>
            <person name="Raymond C."/>
            <person name="Rouse G."/>
            <person name="Saenphimmachak C."/>
            <person name="Sehra H.K."/>
            <person name="Sheridan E."/>
            <person name="Shownkeen R."/>
            <person name="Sims S."/>
            <person name="Skuce C.D."/>
            <person name="Smith M."/>
            <person name="Steward C."/>
            <person name="Subramanian S."/>
            <person name="Sycamore N."/>
            <person name="Tracey A."/>
            <person name="Tromans A."/>
            <person name="Van Helmond Z."/>
            <person name="Wall M."/>
            <person name="Wallis J.M."/>
            <person name="White S."/>
            <person name="Whitehead S.L."/>
            <person name="Wilkinson J.E."/>
            <person name="Willey D.L."/>
            <person name="Williams H."/>
            <person name="Wilming L."/>
            <person name="Wray P.W."/>
            <person name="Wu Z."/>
            <person name="Coulson A."/>
            <person name="Vaudin M."/>
            <person name="Sulston J.E."/>
            <person name="Durbin R.M."/>
            <person name="Hubbard T."/>
            <person name="Wooster R."/>
            <person name="Dunham I."/>
            <person name="Carter N.P."/>
            <person name="McVean G."/>
            <person name="Ross M.T."/>
            <person name="Harrow J."/>
            <person name="Olson M.V."/>
            <person name="Beck S."/>
            <person name="Rogers J."/>
            <person name="Bentley D.R."/>
        </authorList>
    </citation>
    <scope>NUCLEOTIDE SEQUENCE [LARGE SCALE GENOMIC DNA]</scope>
</reference>
<reference key="2">
    <citation type="journal article" date="2004" name="Genome Res.">
        <title>The status, quality, and expansion of the NIH full-length cDNA project: the Mammalian Gene Collection (MGC).</title>
        <authorList>
            <consortium name="The MGC Project Team"/>
        </authorList>
    </citation>
    <scope>NUCLEOTIDE SEQUENCE [LARGE SCALE MRNA]</scope>
</reference>